<reference key="1">
    <citation type="submission" date="2007-11" db="EMBL/GenBank/DDBJ databases">
        <title>Complete sequence of Delftia acidovorans DSM 14801 / SPH-1.</title>
        <authorList>
            <person name="Copeland A."/>
            <person name="Lucas S."/>
            <person name="Lapidus A."/>
            <person name="Barry K."/>
            <person name="Glavina del Rio T."/>
            <person name="Dalin E."/>
            <person name="Tice H."/>
            <person name="Pitluck S."/>
            <person name="Lowry S."/>
            <person name="Clum A."/>
            <person name="Schmutz J."/>
            <person name="Larimer F."/>
            <person name="Land M."/>
            <person name="Hauser L."/>
            <person name="Kyrpides N."/>
            <person name="Kim E."/>
            <person name="Schleheck D."/>
            <person name="Richardson P."/>
        </authorList>
    </citation>
    <scope>NUCLEOTIDE SEQUENCE [LARGE SCALE GENOMIC DNA]</scope>
    <source>
        <strain>DSM 14801 / SPH-1</strain>
    </source>
</reference>
<evidence type="ECO:0000255" key="1">
    <source>
        <dbReference type="HAMAP-Rule" id="MF_01014"/>
    </source>
</evidence>
<keyword id="KW-0028">Amino-acid biosynthesis</keyword>
<keyword id="KW-0963">Cytoplasm</keyword>
<keyword id="KW-0368">Histidine biosynthesis</keyword>
<keyword id="KW-0413">Isomerase</keyword>
<keyword id="KW-1185">Reference proteome</keyword>
<gene>
    <name evidence="1" type="primary">hisA</name>
    <name type="ordered locus">Daci_5518</name>
</gene>
<accession>A9BX71</accession>
<dbReference type="EC" id="5.3.1.16" evidence="1"/>
<dbReference type="EMBL" id="CP000884">
    <property type="protein sequence ID" value="ABX38147.1"/>
    <property type="molecule type" value="Genomic_DNA"/>
</dbReference>
<dbReference type="RefSeq" id="WP_012207316.1">
    <property type="nucleotide sequence ID" value="NC_010002.1"/>
</dbReference>
<dbReference type="SMR" id="A9BX71"/>
<dbReference type="STRING" id="398578.Daci_5518"/>
<dbReference type="GeneID" id="24116943"/>
<dbReference type="KEGG" id="dac:Daci_5518"/>
<dbReference type="eggNOG" id="COG0106">
    <property type="taxonomic scope" value="Bacteria"/>
</dbReference>
<dbReference type="HOGENOM" id="CLU_048577_1_1_4"/>
<dbReference type="UniPathway" id="UPA00031">
    <property type="reaction ID" value="UER00009"/>
</dbReference>
<dbReference type="Proteomes" id="UP000000784">
    <property type="component" value="Chromosome"/>
</dbReference>
<dbReference type="GO" id="GO:0005737">
    <property type="term" value="C:cytoplasm"/>
    <property type="evidence" value="ECO:0007669"/>
    <property type="project" value="UniProtKB-SubCell"/>
</dbReference>
<dbReference type="GO" id="GO:0003949">
    <property type="term" value="F:1-(5-phosphoribosyl)-5-[(5-phosphoribosylamino)methylideneamino]imidazole-4-carboxamide isomerase activity"/>
    <property type="evidence" value="ECO:0007669"/>
    <property type="project" value="UniProtKB-UniRule"/>
</dbReference>
<dbReference type="GO" id="GO:0000105">
    <property type="term" value="P:L-histidine biosynthetic process"/>
    <property type="evidence" value="ECO:0007669"/>
    <property type="project" value="UniProtKB-UniRule"/>
</dbReference>
<dbReference type="GO" id="GO:0000162">
    <property type="term" value="P:L-tryptophan biosynthetic process"/>
    <property type="evidence" value="ECO:0007669"/>
    <property type="project" value="TreeGrafter"/>
</dbReference>
<dbReference type="CDD" id="cd04732">
    <property type="entry name" value="HisA"/>
    <property type="match status" value="1"/>
</dbReference>
<dbReference type="FunFam" id="3.20.20.70:FF:000009">
    <property type="entry name" value="1-(5-phosphoribosyl)-5-[(5-phosphoribosylamino)methylideneamino] imidazole-4-carboxamide isomerase"/>
    <property type="match status" value="1"/>
</dbReference>
<dbReference type="Gene3D" id="3.20.20.70">
    <property type="entry name" value="Aldolase class I"/>
    <property type="match status" value="1"/>
</dbReference>
<dbReference type="HAMAP" id="MF_01014">
    <property type="entry name" value="HisA"/>
    <property type="match status" value="1"/>
</dbReference>
<dbReference type="InterPro" id="IPR013785">
    <property type="entry name" value="Aldolase_TIM"/>
</dbReference>
<dbReference type="InterPro" id="IPR006062">
    <property type="entry name" value="His_biosynth"/>
</dbReference>
<dbReference type="InterPro" id="IPR006063">
    <property type="entry name" value="HisA_bact_arch"/>
</dbReference>
<dbReference type="InterPro" id="IPR044524">
    <property type="entry name" value="Isoase_HisA-like"/>
</dbReference>
<dbReference type="InterPro" id="IPR023016">
    <property type="entry name" value="Isoase_HisA-like_bact"/>
</dbReference>
<dbReference type="InterPro" id="IPR011060">
    <property type="entry name" value="RibuloseP-bd_barrel"/>
</dbReference>
<dbReference type="NCBIfam" id="TIGR00007">
    <property type="entry name" value="1-(5-phosphoribosyl)-5-[(5-phosphoribosylamino)methylideneamino]imidazole-4-carboxamide isomerase"/>
    <property type="match status" value="1"/>
</dbReference>
<dbReference type="NCBIfam" id="NF010112">
    <property type="entry name" value="PRK13585.1"/>
    <property type="match status" value="1"/>
</dbReference>
<dbReference type="PANTHER" id="PTHR43090">
    <property type="entry name" value="1-(5-PHOSPHORIBOSYL)-5-[(5-PHOSPHORIBOSYLAMINO)METHYLIDENEAMINO] IMIDAZOLE-4-CARBOXAMIDE ISOMERASE"/>
    <property type="match status" value="1"/>
</dbReference>
<dbReference type="PANTHER" id="PTHR43090:SF2">
    <property type="entry name" value="1-(5-PHOSPHORIBOSYL)-5-[(5-PHOSPHORIBOSYLAMINO)METHYLIDENEAMINO] IMIDAZOLE-4-CARBOXAMIDE ISOMERASE"/>
    <property type="match status" value="1"/>
</dbReference>
<dbReference type="Pfam" id="PF00977">
    <property type="entry name" value="His_biosynth"/>
    <property type="match status" value="1"/>
</dbReference>
<dbReference type="SUPFAM" id="SSF51366">
    <property type="entry name" value="Ribulose-phoshate binding barrel"/>
    <property type="match status" value="1"/>
</dbReference>
<organism>
    <name type="scientific">Delftia acidovorans (strain DSM 14801 / SPH-1)</name>
    <dbReference type="NCBI Taxonomy" id="398578"/>
    <lineage>
        <taxon>Bacteria</taxon>
        <taxon>Pseudomonadati</taxon>
        <taxon>Pseudomonadota</taxon>
        <taxon>Betaproteobacteria</taxon>
        <taxon>Burkholderiales</taxon>
        <taxon>Comamonadaceae</taxon>
        <taxon>Delftia</taxon>
    </lineage>
</organism>
<name>HIS4_DELAS</name>
<sequence length="246" mass="26024">MLLIPAIDLKDGHCVRLIQGDMDQSTTFGEDPAIIARRWLDAGARRLHLVDLNGAFAGQPKNLVAIKAILKEVDGRIPVQLGGGIRDLDTIEKYIDAGISYVIIGTAAVKNPGFLQDACSAFGGHVIVGLDAKDGKVAIDGWSKLTGQDVHSVAKRFEDWGVESIIYTDIGRDGMLTGINIDATVNLAQSLKIPVIASGGLAGMADIEALCKVEDEGIEGVICGRAIYSGDLDFAAAQARADELRA</sequence>
<proteinExistence type="inferred from homology"/>
<comment type="catalytic activity">
    <reaction evidence="1">
        <text>1-(5-phospho-beta-D-ribosyl)-5-[(5-phospho-beta-D-ribosylamino)methylideneamino]imidazole-4-carboxamide = 5-[(5-phospho-1-deoxy-D-ribulos-1-ylimino)methylamino]-1-(5-phospho-beta-D-ribosyl)imidazole-4-carboxamide</text>
        <dbReference type="Rhea" id="RHEA:15469"/>
        <dbReference type="ChEBI" id="CHEBI:58435"/>
        <dbReference type="ChEBI" id="CHEBI:58525"/>
        <dbReference type="EC" id="5.3.1.16"/>
    </reaction>
</comment>
<comment type="pathway">
    <text evidence="1">Amino-acid biosynthesis; L-histidine biosynthesis; L-histidine from 5-phospho-alpha-D-ribose 1-diphosphate: step 4/9.</text>
</comment>
<comment type="subcellular location">
    <subcellularLocation>
        <location evidence="1">Cytoplasm</location>
    </subcellularLocation>
</comment>
<comment type="similarity">
    <text evidence="1">Belongs to the HisA/HisF family.</text>
</comment>
<protein>
    <recommendedName>
        <fullName evidence="1">1-(5-phosphoribosyl)-5-[(5-phosphoribosylamino)methylideneamino] imidazole-4-carboxamide isomerase</fullName>
        <ecNumber evidence="1">5.3.1.16</ecNumber>
    </recommendedName>
    <alternativeName>
        <fullName evidence="1">Phosphoribosylformimino-5-aminoimidazole carboxamide ribotide isomerase</fullName>
    </alternativeName>
</protein>
<feature type="chain" id="PRO_1000135101" description="1-(5-phosphoribosyl)-5-[(5-phosphoribosylamino)methylideneamino] imidazole-4-carboxamide isomerase">
    <location>
        <begin position="1"/>
        <end position="246"/>
    </location>
</feature>
<feature type="active site" description="Proton acceptor" evidence="1">
    <location>
        <position position="8"/>
    </location>
</feature>
<feature type="active site" description="Proton donor" evidence="1">
    <location>
        <position position="131"/>
    </location>
</feature>